<dbReference type="SMR" id="P86972"/>
<dbReference type="GO" id="GO:0005576">
    <property type="term" value="C:extracellular region"/>
    <property type="evidence" value="ECO:0007669"/>
    <property type="project" value="UniProtKB-SubCell"/>
</dbReference>
<dbReference type="GO" id="GO:0050832">
    <property type="term" value="P:defense response to fungus"/>
    <property type="evidence" value="ECO:0000314"/>
    <property type="project" value="UniProtKB"/>
</dbReference>
<dbReference type="GO" id="GO:0050829">
    <property type="term" value="P:defense response to Gram-negative bacterium"/>
    <property type="evidence" value="ECO:0000314"/>
    <property type="project" value="UniProtKB"/>
</dbReference>
<dbReference type="GO" id="GO:0050830">
    <property type="term" value="P:defense response to Gram-positive bacterium"/>
    <property type="evidence" value="ECO:0000314"/>
    <property type="project" value="UniProtKB"/>
</dbReference>
<dbReference type="GO" id="GO:0031640">
    <property type="term" value="P:killing of cells of another organism"/>
    <property type="evidence" value="ECO:0000314"/>
    <property type="project" value="UniProtKB"/>
</dbReference>
<dbReference type="FunFam" id="3.30.30.10:FF:000003">
    <property type="entry name" value="Defensin-like protein 1"/>
    <property type="match status" value="1"/>
</dbReference>
<dbReference type="Gene3D" id="3.30.30.10">
    <property type="entry name" value="Knottin, scorpion toxin-like"/>
    <property type="match status" value="1"/>
</dbReference>
<dbReference type="InterPro" id="IPR008176">
    <property type="entry name" value="Defensin_plant"/>
</dbReference>
<dbReference type="InterPro" id="IPR003614">
    <property type="entry name" value="Scorpion_toxin-like"/>
</dbReference>
<dbReference type="InterPro" id="IPR036574">
    <property type="entry name" value="Scorpion_toxin-like_sf"/>
</dbReference>
<dbReference type="Pfam" id="PF00304">
    <property type="entry name" value="Gamma-thionin"/>
    <property type="match status" value="1"/>
</dbReference>
<dbReference type="SMART" id="SM00505">
    <property type="entry name" value="Knot1"/>
    <property type="match status" value="1"/>
</dbReference>
<dbReference type="SUPFAM" id="SSF57095">
    <property type="entry name" value="Scorpion toxin-like"/>
    <property type="match status" value="1"/>
</dbReference>
<dbReference type="PROSITE" id="PS00940">
    <property type="entry name" value="GAMMA_THIONIN"/>
    <property type="match status" value="1"/>
</dbReference>
<evidence type="ECO:0000250" key="1">
    <source>
        <dbReference type="UniProtKB" id="P69241"/>
    </source>
</evidence>
<evidence type="ECO:0000255" key="2"/>
<evidence type="ECO:0000269" key="3">
    <source>
    </source>
</evidence>
<evidence type="ECO:0000303" key="4">
    <source>
    </source>
</evidence>
<evidence type="ECO:0000305" key="5"/>
<proteinExistence type="evidence at protein level"/>
<name>DEF1_NIGSA</name>
<comment type="function">
    <text evidence="3">Antimicrobial peptide active against fungi, Gram-positive and Gram-negative bacteria. Inhibits growth of hyphae in the fungi A.niger (IC(50)=3.5 ug/ml), B.sorokiniana (IC(50)=3.0 ug/ml), F.oxysporum (IC(50)=9.5 ug/ml), F.graminearum (IC(50)=6.9 ug/ml), F.culmorum (IC(50)=6.9 ug/ml) and B.cinerea (IC(50)=27.4 ug/ml). Has no effect on spore germination. Destroys spores in germinated conidia by disruption of cell walls and membranes in A.niger and B.sorokiniana. Causes vacuolization of germinated macro- and microconidia in F.oxysporum, F.graminearum and F.culmorum. Strongly inhibits growth of P.infestans on potato tubers above concentrations of 13.6 ug/ml. Inhibits growth of Gram-positive bacteria C.michiganensis and B.subtilis and of Gram-negative bacteria P.syringae, E.carotovora and E.coli.</text>
</comment>
<comment type="subcellular location">
    <subcellularLocation>
        <location evidence="1">Secreted</location>
    </subcellularLocation>
</comment>
<comment type="PTM">
    <text evidence="3">Contains 4 disulfide bonds.</text>
</comment>
<comment type="mass spectrometry"/>
<comment type="similarity">
    <text evidence="2">Belongs to the DEFL family.</text>
</comment>
<reference evidence="5" key="1">
    <citation type="journal article" date="2011" name="Plant Physiol. Biochem.">
        <title>Novel antifungal defensins from Nigella sativa L. seeds.</title>
        <authorList>
            <person name="Rogozhin E.A."/>
            <person name="Oshchepkova Y.I."/>
            <person name="Odintsova T.I."/>
            <person name="Khadeeva N.V."/>
            <person name="Veshkurova O.N."/>
            <person name="Egorov T.A."/>
            <person name="Grishin E.V."/>
            <person name="Salikhov S.I."/>
        </authorList>
    </citation>
    <scope>PROTEIN SEQUENCE</scope>
    <scope>FUNCTION</scope>
    <scope>DISULFIDE BONDS</scope>
    <scope>MASS SPECTROMETRY</scope>
    <source>
        <tissue evidence="3">Seed</tissue>
    </source>
</reference>
<organism>
    <name type="scientific">Nigella sativa</name>
    <name type="common">Black cumin</name>
    <dbReference type="NCBI Taxonomy" id="555479"/>
    <lineage>
        <taxon>Eukaryota</taxon>
        <taxon>Viridiplantae</taxon>
        <taxon>Streptophyta</taxon>
        <taxon>Embryophyta</taxon>
        <taxon>Tracheophyta</taxon>
        <taxon>Spermatophyta</taxon>
        <taxon>Magnoliopsida</taxon>
        <taxon>Ranunculales</taxon>
        <taxon>Ranunculaceae</taxon>
        <taxon>Ranunculoideae</taxon>
        <taxon>Nigelleae</taxon>
        <taxon>Nigella</taxon>
    </lineage>
</organism>
<sequence>KFCEKPSGTWSGVCGNSGACKDQCIRLEGAKHGSCNYKPPAHRCICYYEC</sequence>
<accession>P86972</accession>
<feature type="chain" id="PRO_0000412714" description="Defensin D1">
    <location>
        <begin position="1"/>
        <end position="50"/>
    </location>
</feature>
<feature type="disulfide bond" evidence="1">
    <location>
        <begin position="3"/>
        <end position="50"/>
    </location>
</feature>
<feature type="disulfide bond" evidence="1">
    <location>
        <begin position="14"/>
        <end position="35"/>
    </location>
</feature>
<feature type="disulfide bond" evidence="1">
    <location>
        <begin position="20"/>
        <end position="44"/>
    </location>
</feature>
<feature type="disulfide bond" evidence="1">
    <location>
        <begin position="24"/>
        <end position="46"/>
    </location>
</feature>
<protein>
    <recommendedName>
        <fullName evidence="4">Defensin D1</fullName>
        <shortName evidence="4">Ns-D1</shortName>
    </recommendedName>
</protein>
<keyword id="KW-0044">Antibiotic</keyword>
<keyword id="KW-0929">Antimicrobial</keyword>
<keyword id="KW-0903">Direct protein sequencing</keyword>
<keyword id="KW-1015">Disulfide bond</keyword>
<keyword id="KW-0295">Fungicide</keyword>
<keyword id="KW-0611">Plant defense</keyword>
<keyword id="KW-0964">Secreted</keyword>